<protein>
    <recommendedName>
        <fullName>HTH-type transcriptional regulator SarU</fullName>
    </recommendedName>
    <alternativeName>
        <fullName>Staphylococcal accessory regulator U</fullName>
    </alternativeName>
</protein>
<reference key="1">
    <citation type="journal article" date="2002" name="Lancet">
        <title>Genome and virulence determinants of high virulence community-acquired MRSA.</title>
        <authorList>
            <person name="Baba T."/>
            <person name="Takeuchi F."/>
            <person name="Kuroda M."/>
            <person name="Yuzawa H."/>
            <person name="Aoki K."/>
            <person name="Oguchi A."/>
            <person name="Nagai Y."/>
            <person name="Iwama N."/>
            <person name="Asano K."/>
            <person name="Naimi T."/>
            <person name="Kuroda H."/>
            <person name="Cui L."/>
            <person name="Yamamoto K."/>
            <person name="Hiramatsu K."/>
        </authorList>
    </citation>
    <scope>NUCLEOTIDE SEQUENCE [LARGE SCALE GENOMIC DNA]</scope>
    <source>
        <strain>MW2</strain>
    </source>
</reference>
<keyword id="KW-0010">Activator</keyword>
<keyword id="KW-0963">Cytoplasm</keyword>
<keyword id="KW-0238">DNA-binding</keyword>
<keyword id="KW-0677">Repeat</keyword>
<keyword id="KW-0804">Transcription</keyword>
<keyword id="KW-0805">Transcription regulation</keyword>
<keyword id="KW-0843">Virulence</keyword>
<dbReference type="EMBL" id="BA000033">
    <property type="protein sequence ID" value="BAB96283.1"/>
    <property type="molecule type" value="Genomic_DNA"/>
</dbReference>
<dbReference type="RefSeq" id="WP_000386367.1">
    <property type="nucleotide sequence ID" value="NC_003923.1"/>
</dbReference>
<dbReference type="SMR" id="Q7A004"/>
<dbReference type="KEGG" id="sam:MW2418"/>
<dbReference type="HOGENOM" id="CLU_097164_0_0_9"/>
<dbReference type="GO" id="GO:0005737">
    <property type="term" value="C:cytoplasm"/>
    <property type="evidence" value="ECO:0007669"/>
    <property type="project" value="UniProtKB-SubCell"/>
</dbReference>
<dbReference type="GO" id="GO:0003677">
    <property type="term" value="F:DNA binding"/>
    <property type="evidence" value="ECO:0007669"/>
    <property type="project" value="UniProtKB-KW"/>
</dbReference>
<dbReference type="GO" id="GO:0003700">
    <property type="term" value="F:DNA-binding transcription factor activity"/>
    <property type="evidence" value="ECO:0007669"/>
    <property type="project" value="InterPro"/>
</dbReference>
<dbReference type="GO" id="GO:0006950">
    <property type="term" value="P:response to stress"/>
    <property type="evidence" value="ECO:0007669"/>
    <property type="project" value="TreeGrafter"/>
</dbReference>
<dbReference type="Gene3D" id="1.10.10.10">
    <property type="entry name" value="Winged helix-like DNA-binding domain superfamily/Winged helix DNA-binding domain"/>
    <property type="match status" value="2"/>
</dbReference>
<dbReference type="InterPro" id="IPR039422">
    <property type="entry name" value="MarR/SlyA-like"/>
</dbReference>
<dbReference type="InterPro" id="IPR010166">
    <property type="entry name" value="SarA/Rot_dom"/>
</dbReference>
<dbReference type="InterPro" id="IPR055166">
    <property type="entry name" value="Transc_reg_Sar_Rot_HTH"/>
</dbReference>
<dbReference type="InterPro" id="IPR036388">
    <property type="entry name" value="WH-like_DNA-bd_sf"/>
</dbReference>
<dbReference type="InterPro" id="IPR036390">
    <property type="entry name" value="WH_DNA-bd_sf"/>
</dbReference>
<dbReference type="NCBIfam" id="TIGR01889">
    <property type="entry name" value="Staph_reg_Sar"/>
    <property type="match status" value="2"/>
</dbReference>
<dbReference type="PANTHER" id="PTHR33164:SF5">
    <property type="entry name" value="ORGANIC HYDROPEROXIDE RESISTANCE TRANSCRIPTIONAL REGULATOR"/>
    <property type="match status" value="1"/>
</dbReference>
<dbReference type="PANTHER" id="PTHR33164">
    <property type="entry name" value="TRANSCRIPTIONAL REGULATOR, MARR FAMILY"/>
    <property type="match status" value="1"/>
</dbReference>
<dbReference type="Pfam" id="PF22381">
    <property type="entry name" value="Staph_reg_Sar_Rot"/>
    <property type="match status" value="2"/>
</dbReference>
<dbReference type="SUPFAM" id="SSF46785">
    <property type="entry name" value="Winged helix' DNA-binding domain"/>
    <property type="match status" value="2"/>
</dbReference>
<proteinExistence type="inferred from homology"/>
<feature type="chain" id="PRO_0000219607" description="HTH-type transcriptional regulator SarU">
    <location>
        <begin position="1"/>
        <end position="247"/>
    </location>
</feature>
<feature type="DNA-binding region" description="H-T-H motif" evidence="2">
    <location>
        <begin position="53"/>
        <end position="76"/>
    </location>
</feature>
<feature type="DNA-binding region" description="H-T-H motif" evidence="2">
    <location>
        <begin position="178"/>
        <end position="201"/>
    </location>
</feature>
<sequence length="247" mass="29793">MDYQTFEKVNKFINVEAYIFFLTQELKQQYKLSLKELLILAYFYYKNEHSISLKEIIGDILYKQSDVVKNIKSLSKKGFINKSRNEADERRIFVSVTPIQRKKIACVINELDKIIKGFNKERDYIKYQWAPKYSKEFFILFMNIMYSKDFLKYRFNLTFLDLSILYVISSRKNEILNLKDLFESIRFMYPQIVRSVNRLNNKGMLIKERSLADERIVLIKINKIQYNTIKSIFTDTSKILKPRKFFF</sequence>
<gene>
    <name type="primary">sarU</name>
    <name type="synonym">sarH2</name>
    <name type="ordered locus">MW2418</name>
</gene>
<accession>Q7A004</accession>
<evidence type="ECO:0000250" key="1"/>
<evidence type="ECO:0000255" key="2"/>
<evidence type="ECO:0000305" key="3"/>
<organism>
    <name type="scientific">Staphylococcus aureus (strain MW2)</name>
    <dbReference type="NCBI Taxonomy" id="196620"/>
    <lineage>
        <taxon>Bacteria</taxon>
        <taxon>Bacillati</taxon>
        <taxon>Bacillota</taxon>
        <taxon>Bacilli</taxon>
        <taxon>Bacillales</taxon>
        <taxon>Staphylococcaceae</taxon>
        <taxon>Staphylococcus</taxon>
    </lineage>
</organism>
<name>SARU_STAAW</name>
<comment type="function">
    <text evidence="1">Positive regulator of RNAII and RNAIII in a cell density-dependent manner. It can contribute to the expression of virulence genes controlled by agr. May also regulate target genes via an agr-independent pathway (By similarity).</text>
</comment>
<comment type="subcellular location">
    <subcellularLocation>
        <location evidence="1">Cytoplasm</location>
    </subcellularLocation>
</comment>
<comment type="similarity">
    <text evidence="3">Belongs to the SarA family.</text>
</comment>